<keyword id="KW-0150">Chloroplast</keyword>
<keyword id="KW-0240">DNA-directed RNA polymerase</keyword>
<keyword id="KW-0548">Nucleotidyltransferase</keyword>
<keyword id="KW-0934">Plastid</keyword>
<keyword id="KW-0804">Transcription</keyword>
<keyword id="KW-0808">Transferase</keyword>
<comment type="function">
    <text evidence="1">DNA-dependent RNA polymerase catalyzes the transcription of DNA into RNA using the four ribonucleoside triphosphates as substrates.</text>
</comment>
<comment type="catalytic activity">
    <reaction evidence="1">
        <text>RNA(n) + a ribonucleoside 5'-triphosphate = RNA(n+1) + diphosphate</text>
        <dbReference type="Rhea" id="RHEA:21248"/>
        <dbReference type="Rhea" id="RHEA-COMP:14527"/>
        <dbReference type="Rhea" id="RHEA-COMP:17342"/>
        <dbReference type="ChEBI" id="CHEBI:33019"/>
        <dbReference type="ChEBI" id="CHEBI:61557"/>
        <dbReference type="ChEBI" id="CHEBI:140395"/>
        <dbReference type="EC" id="2.7.7.6"/>
    </reaction>
</comment>
<comment type="subunit">
    <text evidence="1">In plastids the minimal PEP RNA polymerase catalytic core is composed of four subunits: alpha, beta, beta', and beta''. When a (nuclear-encoded) sigma factor is associated with the core the holoenzyme is formed, which can initiate transcription.</text>
</comment>
<comment type="subcellular location">
    <subcellularLocation>
        <location evidence="1">Plastid</location>
        <location evidence="1">Chloroplast</location>
    </subcellularLocation>
</comment>
<comment type="similarity">
    <text evidence="1">Belongs to the RNA polymerase beta' chain family. RpoC2 subfamily.</text>
</comment>
<comment type="caution">
    <text evidence="2">The universally conserved zinc-binding site of this subunit is not present in this sequence.</text>
</comment>
<dbReference type="EC" id="2.7.7.6" evidence="1"/>
<dbReference type="EMBL" id="AP004638">
    <property type="protein sequence ID" value="BAB84206.1"/>
    <property type="molecule type" value="Genomic_DNA"/>
</dbReference>
<dbReference type="RefSeq" id="NP_569619.2">
    <property type="nucleotide sequence ID" value="NC_003386.1"/>
</dbReference>
<dbReference type="SMR" id="Q8WI26"/>
<dbReference type="GeneID" id="2545169"/>
<dbReference type="GO" id="GO:0009507">
    <property type="term" value="C:chloroplast"/>
    <property type="evidence" value="ECO:0007669"/>
    <property type="project" value="UniProtKB-SubCell"/>
</dbReference>
<dbReference type="GO" id="GO:0000428">
    <property type="term" value="C:DNA-directed RNA polymerase complex"/>
    <property type="evidence" value="ECO:0007669"/>
    <property type="project" value="UniProtKB-KW"/>
</dbReference>
<dbReference type="GO" id="GO:0005739">
    <property type="term" value="C:mitochondrion"/>
    <property type="evidence" value="ECO:0007669"/>
    <property type="project" value="GOC"/>
</dbReference>
<dbReference type="GO" id="GO:0003677">
    <property type="term" value="F:DNA binding"/>
    <property type="evidence" value="ECO:0007669"/>
    <property type="project" value="UniProtKB-UniRule"/>
</dbReference>
<dbReference type="GO" id="GO:0003899">
    <property type="term" value="F:DNA-directed RNA polymerase activity"/>
    <property type="evidence" value="ECO:0007669"/>
    <property type="project" value="UniProtKB-UniRule"/>
</dbReference>
<dbReference type="GO" id="GO:0006351">
    <property type="term" value="P:DNA-templated transcription"/>
    <property type="evidence" value="ECO:0007669"/>
    <property type="project" value="UniProtKB-UniRule"/>
</dbReference>
<dbReference type="CDD" id="cd02655">
    <property type="entry name" value="RNAP_beta'_C"/>
    <property type="match status" value="1"/>
</dbReference>
<dbReference type="Gene3D" id="1.10.132.30">
    <property type="match status" value="1"/>
</dbReference>
<dbReference type="Gene3D" id="1.10.150.390">
    <property type="match status" value="1"/>
</dbReference>
<dbReference type="Gene3D" id="1.10.1790.20">
    <property type="match status" value="1"/>
</dbReference>
<dbReference type="Gene3D" id="1.10.274.100">
    <property type="entry name" value="RNA polymerase Rpb1, domain 3"/>
    <property type="match status" value="1"/>
</dbReference>
<dbReference type="HAMAP" id="MF_01324">
    <property type="entry name" value="RNApol_bact_RpoC2"/>
    <property type="match status" value="1"/>
</dbReference>
<dbReference type="InterPro" id="IPR012756">
    <property type="entry name" value="DNA-dir_RpoC2_beta_pp"/>
</dbReference>
<dbReference type="InterPro" id="IPR050254">
    <property type="entry name" value="RNA_pol_beta''_euk"/>
</dbReference>
<dbReference type="InterPro" id="IPR042102">
    <property type="entry name" value="RNA_pol_Rpb1_3_sf"/>
</dbReference>
<dbReference type="InterPro" id="IPR007083">
    <property type="entry name" value="RNA_pol_Rpb1_4"/>
</dbReference>
<dbReference type="InterPro" id="IPR007081">
    <property type="entry name" value="RNA_pol_Rpb1_5"/>
</dbReference>
<dbReference type="InterPro" id="IPR038120">
    <property type="entry name" value="Rpb1_funnel_sf"/>
</dbReference>
<dbReference type="NCBIfam" id="TIGR02388">
    <property type="entry name" value="rpoC2_cyan"/>
    <property type="match status" value="1"/>
</dbReference>
<dbReference type="PANTHER" id="PTHR34995">
    <property type="entry name" value="DNA-DIRECTED RNA POLYMERASE SUBUNIT BETA"/>
    <property type="match status" value="1"/>
</dbReference>
<dbReference type="PANTHER" id="PTHR34995:SF1">
    <property type="entry name" value="DNA-DIRECTED RNA POLYMERASE SUBUNIT BETA"/>
    <property type="match status" value="1"/>
</dbReference>
<dbReference type="Pfam" id="PF05000">
    <property type="entry name" value="RNA_pol_Rpb1_4"/>
    <property type="match status" value="1"/>
</dbReference>
<dbReference type="Pfam" id="PF04998">
    <property type="entry name" value="RNA_pol_Rpb1_5"/>
    <property type="match status" value="2"/>
</dbReference>
<dbReference type="SUPFAM" id="SSF64484">
    <property type="entry name" value="beta and beta-prime subunits of DNA dependent RNA-polymerase"/>
    <property type="match status" value="1"/>
</dbReference>
<name>RPOC2_PSINU</name>
<gene>
    <name evidence="1" type="primary">rpoC2</name>
</gene>
<geneLocation type="chloroplast"/>
<reference key="1">
    <citation type="journal article" date="2004" name="Mol. Biol. Evol.">
        <title>Chloroplast phylogeny indicates that bryophytes are monophyletic.</title>
        <authorList>
            <person name="Nishiyama T."/>
            <person name="Wolf P.G."/>
            <person name="Kugita M."/>
            <person name="Sinclair R.B."/>
            <person name="Sugita M."/>
            <person name="Sugiura C."/>
            <person name="Wakasugi T."/>
            <person name="Yamada K."/>
            <person name="Yoshinaga K."/>
            <person name="Yamaguchi K."/>
            <person name="Ueda K."/>
            <person name="Hasebe M."/>
        </authorList>
    </citation>
    <scope>NUCLEOTIDE SEQUENCE [LARGE SCALE GENOMIC DNA]</scope>
    <source>
        <strain>Kingyoku</strain>
    </source>
</reference>
<feature type="chain" id="PRO_0000067944" description="DNA-directed RNA polymerase subunit beta''">
    <location>
        <begin position="1"/>
        <end position="1408"/>
    </location>
</feature>
<evidence type="ECO:0000255" key="1">
    <source>
        <dbReference type="HAMAP-Rule" id="MF_01324"/>
    </source>
</evidence>
<evidence type="ECO:0000305" key="2"/>
<accession>Q8WI26</accession>
<proteinExistence type="inferred from homology"/>
<organism>
    <name type="scientific">Psilotum nudum</name>
    <name type="common">Whisk fern</name>
    <name type="synonym">Lycopodium nudum</name>
    <dbReference type="NCBI Taxonomy" id="3240"/>
    <lineage>
        <taxon>Eukaryota</taxon>
        <taxon>Viridiplantae</taxon>
        <taxon>Streptophyta</taxon>
        <taxon>Embryophyta</taxon>
        <taxon>Tracheophyta</taxon>
        <taxon>Polypodiopsida</taxon>
        <taxon>Ophioglossidae</taxon>
        <taxon>Psilotales</taxon>
        <taxon>Psilotaceae</taxon>
        <taxon>Psilotum</taxon>
    </lineage>
</organism>
<sequence length="1408" mass="161758">MMVDQIKLLFYNKMMDRTAIKQLISRLIAQFGITYTTNILDQLKTLGFKQATNASVSLGIDDLLEAPSKAWLIQDAERQGSIFEQHHRFGSVHAVEKLRQLIETWYATSEYLKREMIPNFRIIDPLNPVHMMSFSGARGSTSQVHQLVGMRGLMSDPQGQIIDLPIRSNLREGLSLTEYIISCYGARKGVVDTAVRTSDAGYLTRRLVEVVQHIVVRKMDCGSTRGIPFKMTQDRFKRNLYQQRLIGRVLADNVYLEMRCIAMRNQDIGNELANRLITIQKQLVYVRSPLTRKSISWVCQLCYGWSLTHQNLVELGEAVGIIAGQSIGEPGTQLTLRTFHTGGVFTGDIAEHIRIPFNGIISFAEDSVHPIRTRHGHPAWICQDNLSVSVKNKNRIHNVIIPYQSLILVQNNQYVESKQVIAEVRINQSLPKERVKKHIYSNSEGEMHWSTIVRHSPQHRQSNVYPVLKTGHIWILSGSLCNVIETSSSFYKEQDRFNIQSVFTKPEFLPYSFGRNKGEKNQLTNLHKKGQELNHLKFDSSATIKTYKFPYLTSLFYCKIRKDKTENKVILSIKPIQRRNKYYRKTPYRDFVFQTPTNGILNRGDILAIHENPEYRIHISGVIKYGTLKIDSIVENERIPNDREKTTFGSRYKVLRGGNFFFLPGEIYIVHESSAYILVSNNSIVQAGTQITPTLTSQLGGLVQIKNIQKSFEIRILPGTIHHPKRIPSISKQNNMLIPPGQSVFDNLKFDHWIYLQWITSPRKKTFALARPVIEYFVRKGSYPPILNLLKEQNTLRVKFLDYMLYEDGEEIQIKNNMSIQLVQTCLLLDWEKKSPIKAAKTSILELRINKIIKTFLQISLLNSFDFYVKGSKFKRFFNNKKSFVADSIPKTLESQLSIKHQGTIRSVSNRKTSFLVLSPSDSFQNSLSTNFQYYDSKNRYGKKKELKWNTFFDTKKVSRSLKKNYLSSIKDSEKRSLNSKVGLTSVSSFDHTRQLQGMKILGLLGYLYSIANCFLYPKGIFRNEVFFHRDSSIDDLVGFDKLPNWYFLDENRKIYSFHLRNLIGKRFFYWTRNLSNFNEIPLVNLGQFICEGARLFENQISSQSGQIIALSPEFLIIRLAKLYLATKGATIHNHYGDLLREGDTLITLTYERFKSGDIIQGLPKVEQLLEARSVNAVSRNIEDNFKKCNRVIAKFIESPWSFFFSAKISTEQSRKDLVDQIQGVYQSQGVQISDKHIEIIVRQMTSKVLTLEDGIATVFLPGELIELPRAQRMNRALKQLIYYKPILLGITKASLNTTSFLSEASFQETTRVLARAAIRGRIDWLKGLKENVIIGGIVPTGTGSREVTCQMDLEKHKKGSNLKIKNTHSFSCEIKDLLFNHGKVSLTFKRSNIHRELKKPLSENDSD</sequence>
<protein>
    <recommendedName>
        <fullName evidence="1">DNA-directed RNA polymerase subunit beta''</fullName>
        <ecNumber evidence="1">2.7.7.6</ecNumber>
    </recommendedName>
    <alternativeName>
        <fullName evidence="1">PEP</fullName>
    </alternativeName>
    <alternativeName>
        <fullName evidence="1">Plastid-encoded RNA polymerase subunit beta''</fullName>
        <shortName evidence="1">RNA polymerase subunit beta''</shortName>
    </alternativeName>
</protein>